<gene>
    <name evidence="1" type="primary">gltX</name>
    <name type="ordered locus">Rcas_2320</name>
</gene>
<accession>A7NLL2</accession>
<name>SYE_ROSCS</name>
<reference key="1">
    <citation type="submission" date="2007-08" db="EMBL/GenBank/DDBJ databases">
        <title>Complete sequence of Roseiflexus castenholzii DSM 13941.</title>
        <authorList>
            <consortium name="US DOE Joint Genome Institute"/>
            <person name="Copeland A."/>
            <person name="Lucas S."/>
            <person name="Lapidus A."/>
            <person name="Barry K."/>
            <person name="Glavina del Rio T."/>
            <person name="Dalin E."/>
            <person name="Tice H."/>
            <person name="Pitluck S."/>
            <person name="Thompson L.S."/>
            <person name="Brettin T."/>
            <person name="Bruce D."/>
            <person name="Detter J.C."/>
            <person name="Han C."/>
            <person name="Tapia R."/>
            <person name="Schmutz J."/>
            <person name="Larimer F."/>
            <person name="Land M."/>
            <person name="Hauser L."/>
            <person name="Kyrpides N."/>
            <person name="Mikhailova N."/>
            <person name="Bryant D.A."/>
            <person name="Hanada S."/>
            <person name="Tsukatani Y."/>
            <person name="Richardson P."/>
        </authorList>
    </citation>
    <scope>NUCLEOTIDE SEQUENCE [LARGE SCALE GENOMIC DNA]</scope>
    <source>
        <strain>DSM 13941 / HLO8</strain>
    </source>
</reference>
<feature type="chain" id="PRO_1000074328" description="Glutamate--tRNA ligase">
    <location>
        <begin position="1"/>
        <end position="507"/>
    </location>
</feature>
<feature type="short sequence motif" description="'HIGH' region" evidence="1">
    <location>
        <begin position="14"/>
        <end position="24"/>
    </location>
</feature>
<feature type="short sequence motif" description="'KMSKS' region" evidence="1">
    <location>
        <begin position="261"/>
        <end position="265"/>
    </location>
</feature>
<feature type="binding site" evidence="1">
    <location>
        <position position="264"/>
    </location>
    <ligand>
        <name>ATP</name>
        <dbReference type="ChEBI" id="CHEBI:30616"/>
    </ligand>
</feature>
<organism>
    <name type="scientific">Roseiflexus castenholzii (strain DSM 13941 / HLO8)</name>
    <dbReference type="NCBI Taxonomy" id="383372"/>
    <lineage>
        <taxon>Bacteria</taxon>
        <taxon>Bacillati</taxon>
        <taxon>Chloroflexota</taxon>
        <taxon>Chloroflexia</taxon>
        <taxon>Chloroflexales</taxon>
        <taxon>Roseiflexineae</taxon>
        <taxon>Roseiflexaceae</taxon>
        <taxon>Roseiflexus</taxon>
    </lineage>
</organism>
<evidence type="ECO:0000255" key="1">
    <source>
        <dbReference type="HAMAP-Rule" id="MF_00022"/>
    </source>
</evidence>
<proteinExistence type="inferred from homology"/>
<sequence length="507" mass="57432">MGVIQGPVRVRFAPSPTGYLHIGGVRTALFNWLFARHYGGQFILRIEDTDEKRYVPGSADDLMASLRWVGIEWDEGPDIGGPHAPYVQSLRYEAGIYRPFVEQLLESGHAYLSFTTEEELERMRAEAQARGVKAFRFRGPERDWPLDRQREMAATGRPYTVRLKTPTEGVTAFRDLVRGGERIEFKNEELYDIVLVKSSGMPVYHLAHLVDDHLMRMTHVLRSDEWVASTPYHVLLYQAFGWDPPAFAHLPPILRQDGRGKLSKRTDDVAANRFWERGYLPDAMFNYLALQGWSYDGYTEIMSREELIERFTLDRVQPSPARWNPEKLLDMNGIYIRRLTTEQLVDAMAPFLARAGLIGNPPTPDERAYLLQLAPLIHERLKELGEAPELLEFFFRDVTDYDPQALIPKKMDASTTVAALQAARDRLASLEPWTHDRLEAELRALGEELGLKPGQLFGALRVAATGRTVAPPLFDTLAALGKPRTLRRLEAAISVLAAAHAEVKGQS</sequence>
<comment type="function">
    <text evidence="1">Catalyzes the attachment of glutamate to tRNA(Glu) in a two-step reaction: glutamate is first activated by ATP to form Glu-AMP and then transferred to the acceptor end of tRNA(Glu).</text>
</comment>
<comment type="catalytic activity">
    <reaction evidence="1">
        <text>tRNA(Glu) + L-glutamate + ATP = L-glutamyl-tRNA(Glu) + AMP + diphosphate</text>
        <dbReference type="Rhea" id="RHEA:23540"/>
        <dbReference type="Rhea" id="RHEA-COMP:9663"/>
        <dbReference type="Rhea" id="RHEA-COMP:9680"/>
        <dbReference type="ChEBI" id="CHEBI:29985"/>
        <dbReference type="ChEBI" id="CHEBI:30616"/>
        <dbReference type="ChEBI" id="CHEBI:33019"/>
        <dbReference type="ChEBI" id="CHEBI:78442"/>
        <dbReference type="ChEBI" id="CHEBI:78520"/>
        <dbReference type="ChEBI" id="CHEBI:456215"/>
        <dbReference type="EC" id="6.1.1.17"/>
    </reaction>
</comment>
<comment type="subunit">
    <text evidence="1">Monomer.</text>
</comment>
<comment type="subcellular location">
    <subcellularLocation>
        <location evidence="1">Cytoplasm</location>
    </subcellularLocation>
</comment>
<comment type="similarity">
    <text evidence="1">Belongs to the class-I aminoacyl-tRNA synthetase family. Glutamate--tRNA ligase type 1 subfamily.</text>
</comment>
<protein>
    <recommendedName>
        <fullName evidence="1">Glutamate--tRNA ligase</fullName>
        <ecNumber evidence="1">6.1.1.17</ecNumber>
    </recommendedName>
    <alternativeName>
        <fullName evidence="1">Glutamyl-tRNA synthetase</fullName>
        <shortName evidence="1">GluRS</shortName>
    </alternativeName>
</protein>
<dbReference type="EC" id="6.1.1.17" evidence="1"/>
<dbReference type="EMBL" id="CP000804">
    <property type="protein sequence ID" value="ABU58403.1"/>
    <property type="molecule type" value="Genomic_DNA"/>
</dbReference>
<dbReference type="RefSeq" id="WP_012120827.1">
    <property type="nucleotide sequence ID" value="NC_009767.1"/>
</dbReference>
<dbReference type="SMR" id="A7NLL2"/>
<dbReference type="STRING" id="383372.Rcas_2320"/>
<dbReference type="KEGG" id="rca:Rcas_2320"/>
<dbReference type="eggNOG" id="COG0008">
    <property type="taxonomic scope" value="Bacteria"/>
</dbReference>
<dbReference type="HOGENOM" id="CLU_015768_6_1_0"/>
<dbReference type="OrthoDB" id="9807503at2"/>
<dbReference type="Proteomes" id="UP000000263">
    <property type="component" value="Chromosome"/>
</dbReference>
<dbReference type="GO" id="GO:0005829">
    <property type="term" value="C:cytosol"/>
    <property type="evidence" value="ECO:0007669"/>
    <property type="project" value="TreeGrafter"/>
</dbReference>
<dbReference type="GO" id="GO:0005524">
    <property type="term" value="F:ATP binding"/>
    <property type="evidence" value="ECO:0007669"/>
    <property type="project" value="UniProtKB-UniRule"/>
</dbReference>
<dbReference type="GO" id="GO:0004818">
    <property type="term" value="F:glutamate-tRNA ligase activity"/>
    <property type="evidence" value="ECO:0007669"/>
    <property type="project" value="UniProtKB-UniRule"/>
</dbReference>
<dbReference type="GO" id="GO:0000049">
    <property type="term" value="F:tRNA binding"/>
    <property type="evidence" value="ECO:0007669"/>
    <property type="project" value="InterPro"/>
</dbReference>
<dbReference type="GO" id="GO:0008270">
    <property type="term" value="F:zinc ion binding"/>
    <property type="evidence" value="ECO:0007669"/>
    <property type="project" value="InterPro"/>
</dbReference>
<dbReference type="GO" id="GO:0006424">
    <property type="term" value="P:glutamyl-tRNA aminoacylation"/>
    <property type="evidence" value="ECO:0007669"/>
    <property type="project" value="UniProtKB-UniRule"/>
</dbReference>
<dbReference type="CDD" id="cd00808">
    <property type="entry name" value="GluRS_core"/>
    <property type="match status" value="1"/>
</dbReference>
<dbReference type="FunFam" id="3.40.50.620:FF:000127">
    <property type="entry name" value="Glutamate--tRNA ligase"/>
    <property type="match status" value="1"/>
</dbReference>
<dbReference type="Gene3D" id="1.10.10.350">
    <property type="match status" value="1"/>
</dbReference>
<dbReference type="Gene3D" id="1.10.8.70">
    <property type="entry name" value="Glutamate-tRNA synthetase, class I, anticodon-binding domain 1"/>
    <property type="match status" value="1"/>
</dbReference>
<dbReference type="Gene3D" id="3.40.50.620">
    <property type="entry name" value="HUPs"/>
    <property type="match status" value="1"/>
</dbReference>
<dbReference type="HAMAP" id="MF_00022">
    <property type="entry name" value="Glu_tRNA_synth_type1"/>
    <property type="match status" value="1"/>
</dbReference>
<dbReference type="InterPro" id="IPR045462">
    <property type="entry name" value="aa-tRNA-synth_I_cd-bd"/>
</dbReference>
<dbReference type="InterPro" id="IPR020751">
    <property type="entry name" value="aa-tRNA-synth_I_codon-bd_sub2"/>
</dbReference>
<dbReference type="InterPro" id="IPR001412">
    <property type="entry name" value="aa-tRNA-synth_I_CS"/>
</dbReference>
<dbReference type="InterPro" id="IPR008925">
    <property type="entry name" value="aa_tRNA-synth_I_cd-bd_sf"/>
</dbReference>
<dbReference type="InterPro" id="IPR004527">
    <property type="entry name" value="Glu-tRNA-ligase_bac/mito"/>
</dbReference>
<dbReference type="InterPro" id="IPR020752">
    <property type="entry name" value="Glu-tRNA-synth_I_codon-bd_sub1"/>
</dbReference>
<dbReference type="InterPro" id="IPR000924">
    <property type="entry name" value="Glu/Gln-tRNA-synth"/>
</dbReference>
<dbReference type="InterPro" id="IPR020058">
    <property type="entry name" value="Glu/Gln-tRNA-synth_Ib_cat-dom"/>
</dbReference>
<dbReference type="InterPro" id="IPR049940">
    <property type="entry name" value="GluQ/Sye"/>
</dbReference>
<dbReference type="InterPro" id="IPR033910">
    <property type="entry name" value="GluRS_core"/>
</dbReference>
<dbReference type="InterPro" id="IPR014729">
    <property type="entry name" value="Rossmann-like_a/b/a_fold"/>
</dbReference>
<dbReference type="NCBIfam" id="TIGR00464">
    <property type="entry name" value="gltX_bact"/>
    <property type="match status" value="1"/>
</dbReference>
<dbReference type="PANTHER" id="PTHR43311">
    <property type="entry name" value="GLUTAMATE--TRNA LIGASE"/>
    <property type="match status" value="1"/>
</dbReference>
<dbReference type="PANTHER" id="PTHR43311:SF2">
    <property type="entry name" value="GLUTAMATE--TRNA LIGASE, MITOCHONDRIAL-RELATED"/>
    <property type="match status" value="1"/>
</dbReference>
<dbReference type="Pfam" id="PF19269">
    <property type="entry name" value="Anticodon_2"/>
    <property type="match status" value="1"/>
</dbReference>
<dbReference type="Pfam" id="PF00749">
    <property type="entry name" value="tRNA-synt_1c"/>
    <property type="match status" value="1"/>
</dbReference>
<dbReference type="PRINTS" id="PR00987">
    <property type="entry name" value="TRNASYNTHGLU"/>
</dbReference>
<dbReference type="SUPFAM" id="SSF48163">
    <property type="entry name" value="An anticodon-binding domain of class I aminoacyl-tRNA synthetases"/>
    <property type="match status" value="1"/>
</dbReference>
<dbReference type="SUPFAM" id="SSF52374">
    <property type="entry name" value="Nucleotidylyl transferase"/>
    <property type="match status" value="1"/>
</dbReference>
<dbReference type="PROSITE" id="PS00178">
    <property type="entry name" value="AA_TRNA_LIGASE_I"/>
    <property type="match status" value="1"/>
</dbReference>
<keyword id="KW-0030">Aminoacyl-tRNA synthetase</keyword>
<keyword id="KW-0067">ATP-binding</keyword>
<keyword id="KW-0963">Cytoplasm</keyword>
<keyword id="KW-0436">Ligase</keyword>
<keyword id="KW-0547">Nucleotide-binding</keyword>
<keyword id="KW-0648">Protein biosynthesis</keyword>
<keyword id="KW-1185">Reference proteome</keyword>